<sequence>MRLVLLGPPGSGKGTQAARLKDTFQIPHISTGDLLRAEVAAGSPLGLKAKEVMARGDLVSDEILLGMLEARLGQADVANGFILDGYPRNVAQANALDSLLSKIGQPLDAVVQLDVASELLVERIAGRAKAEGREDDNPESVRKRLQVYTDSTAPVIGFYEQRGKLARVDGVGSLDEVLERIGQALGR</sequence>
<organism>
    <name type="scientific">Xanthomonas campestris pv. campestris (strain ATCC 33913 / DSM 3586 / NCPPB 528 / LMG 568 / P 25)</name>
    <dbReference type="NCBI Taxonomy" id="190485"/>
    <lineage>
        <taxon>Bacteria</taxon>
        <taxon>Pseudomonadati</taxon>
        <taxon>Pseudomonadota</taxon>
        <taxon>Gammaproteobacteria</taxon>
        <taxon>Lysobacterales</taxon>
        <taxon>Lysobacteraceae</taxon>
        <taxon>Xanthomonas</taxon>
    </lineage>
</organism>
<evidence type="ECO:0000255" key="1">
    <source>
        <dbReference type="HAMAP-Rule" id="MF_00235"/>
    </source>
</evidence>
<feature type="chain" id="PRO_0000158890" description="Adenylate kinase">
    <location>
        <begin position="1"/>
        <end position="187"/>
    </location>
</feature>
<feature type="region of interest" description="NMP" evidence="1">
    <location>
        <begin position="30"/>
        <end position="59"/>
    </location>
</feature>
<feature type="region of interest" description="LID" evidence="1">
    <location>
        <begin position="126"/>
        <end position="136"/>
    </location>
</feature>
<feature type="binding site" evidence="1">
    <location>
        <begin position="10"/>
        <end position="15"/>
    </location>
    <ligand>
        <name>ATP</name>
        <dbReference type="ChEBI" id="CHEBI:30616"/>
    </ligand>
</feature>
<feature type="binding site" evidence="1">
    <location>
        <position position="31"/>
    </location>
    <ligand>
        <name>AMP</name>
        <dbReference type="ChEBI" id="CHEBI:456215"/>
    </ligand>
</feature>
<feature type="binding site" evidence="1">
    <location>
        <position position="36"/>
    </location>
    <ligand>
        <name>AMP</name>
        <dbReference type="ChEBI" id="CHEBI:456215"/>
    </ligand>
</feature>
<feature type="binding site" evidence="1">
    <location>
        <begin position="57"/>
        <end position="59"/>
    </location>
    <ligand>
        <name>AMP</name>
        <dbReference type="ChEBI" id="CHEBI:456215"/>
    </ligand>
</feature>
<feature type="binding site" evidence="1">
    <location>
        <begin position="85"/>
        <end position="88"/>
    </location>
    <ligand>
        <name>AMP</name>
        <dbReference type="ChEBI" id="CHEBI:456215"/>
    </ligand>
</feature>
<feature type="binding site" evidence="1">
    <location>
        <position position="92"/>
    </location>
    <ligand>
        <name>AMP</name>
        <dbReference type="ChEBI" id="CHEBI:456215"/>
    </ligand>
</feature>
<feature type="binding site" evidence="1">
    <location>
        <position position="127"/>
    </location>
    <ligand>
        <name>ATP</name>
        <dbReference type="ChEBI" id="CHEBI:30616"/>
    </ligand>
</feature>
<feature type="binding site" evidence="1">
    <location>
        <position position="133"/>
    </location>
    <ligand>
        <name>AMP</name>
        <dbReference type="ChEBI" id="CHEBI:456215"/>
    </ligand>
</feature>
<feature type="binding site" evidence="1">
    <location>
        <position position="144"/>
    </location>
    <ligand>
        <name>AMP</name>
        <dbReference type="ChEBI" id="CHEBI:456215"/>
    </ligand>
</feature>
<feature type="binding site" evidence="1">
    <location>
        <position position="172"/>
    </location>
    <ligand>
        <name>ATP</name>
        <dbReference type="ChEBI" id="CHEBI:30616"/>
    </ligand>
</feature>
<gene>
    <name evidence="1" type="primary">adk</name>
    <name type="ordered locus">XCC3291</name>
</gene>
<name>KAD_XANCP</name>
<comment type="function">
    <text evidence="1">Catalyzes the reversible transfer of the terminal phosphate group between ATP and AMP. Plays an important role in cellular energy homeostasis and in adenine nucleotide metabolism.</text>
</comment>
<comment type="catalytic activity">
    <reaction evidence="1">
        <text>AMP + ATP = 2 ADP</text>
        <dbReference type="Rhea" id="RHEA:12973"/>
        <dbReference type="ChEBI" id="CHEBI:30616"/>
        <dbReference type="ChEBI" id="CHEBI:456215"/>
        <dbReference type="ChEBI" id="CHEBI:456216"/>
        <dbReference type="EC" id="2.7.4.3"/>
    </reaction>
</comment>
<comment type="pathway">
    <text evidence="1">Purine metabolism; AMP biosynthesis via salvage pathway; AMP from ADP: step 1/1.</text>
</comment>
<comment type="subunit">
    <text evidence="1">Monomer.</text>
</comment>
<comment type="subcellular location">
    <subcellularLocation>
        <location evidence="1">Cytoplasm</location>
    </subcellularLocation>
</comment>
<comment type="domain">
    <text evidence="1">Consists of three domains, a large central CORE domain and two small peripheral domains, NMPbind and LID, which undergo movements during catalysis. The LID domain closes over the site of phosphoryl transfer upon ATP binding. Assembling and dissambling the active center during each catalytic cycle provides an effective means to prevent ATP hydrolysis.</text>
</comment>
<comment type="similarity">
    <text evidence="1">Belongs to the adenylate kinase family.</text>
</comment>
<proteinExistence type="inferred from homology"/>
<protein>
    <recommendedName>
        <fullName evidence="1">Adenylate kinase</fullName>
        <shortName evidence="1">AK</shortName>
        <ecNumber evidence="1">2.7.4.3</ecNumber>
    </recommendedName>
    <alternativeName>
        <fullName evidence="1">ATP-AMP transphosphorylase</fullName>
    </alternativeName>
    <alternativeName>
        <fullName evidence="1">ATP:AMP phosphotransferase</fullName>
    </alternativeName>
    <alternativeName>
        <fullName evidence="1">Adenylate monophosphate kinase</fullName>
    </alternativeName>
</protein>
<accession>Q8P5P5</accession>
<reference key="1">
    <citation type="journal article" date="2002" name="Nature">
        <title>Comparison of the genomes of two Xanthomonas pathogens with differing host specificities.</title>
        <authorList>
            <person name="da Silva A.C.R."/>
            <person name="Ferro J.A."/>
            <person name="Reinach F.C."/>
            <person name="Farah C.S."/>
            <person name="Furlan L.R."/>
            <person name="Quaggio R.B."/>
            <person name="Monteiro-Vitorello C.B."/>
            <person name="Van Sluys M.A."/>
            <person name="Almeida N.F. Jr."/>
            <person name="Alves L.M.C."/>
            <person name="do Amaral A.M."/>
            <person name="Bertolini M.C."/>
            <person name="Camargo L.E.A."/>
            <person name="Camarotte G."/>
            <person name="Cannavan F."/>
            <person name="Cardozo J."/>
            <person name="Chambergo F."/>
            <person name="Ciapina L.P."/>
            <person name="Cicarelli R.M.B."/>
            <person name="Coutinho L.L."/>
            <person name="Cursino-Santos J.R."/>
            <person name="El-Dorry H."/>
            <person name="Faria J.B."/>
            <person name="Ferreira A.J.S."/>
            <person name="Ferreira R.C.C."/>
            <person name="Ferro M.I.T."/>
            <person name="Formighieri E.F."/>
            <person name="Franco M.C."/>
            <person name="Greggio C.C."/>
            <person name="Gruber A."/>
            <person name="Katsuyama A.M."/>
            <person name="Kishi L.T."/>
            <person name="Leite R.P."/>
            <person name="Lemos E.G.M."/>
            <person name="Lemos M.V.F."/>
            <person name="Locali E.C."/>
            <person name="Machado M.A."/>
            <person name="Madeira A.M.B.N."/>
            <person name="Martinez-Rossi N.M."/>
            <person name="Martins E.C."/>
            <person name="Meidanis J."/>
            <person name="Menck C.F.M."/>
            <person name="Miyaki C.Y."/>
            <person name="Moon D.H."/>
            <person name="Moreira L.M."/>
            <person name="Novo M.T.M."/>
            <person name="Okura V.K."/>
            <person name="Oliveira M.C."/>
            <person name="Oliveira V.R."/>
            <person name="Pereira H.A."/>
            <person name="Rossi A."/>
            <person name="Sena J.A.D."/>
            <person name="Silva C."/>
            <person name="de Souza R.F."/>
            <person name="Spinola L.A.F."/>
            <person name="Takita M.A."/>
            <person name="Tamura R.E."/>
            <person name="Teixeira E.C."/>
            <person name="Tezza R.I.D."/>
            <person name="Trindade dos Santos M."/>
            <person name="Truffi D."/>
            <person name="Tsai S.M."/>
            <person name="White F.F."/>
            <person name="Setubal J.C."/>
            <person name="Kitajima J.P."/>
        </authorList>
    </citation>
    <scope>NUCLEOTIDE SEQUENCE [LARGE SCALE GENOMIC DNA]</scope>
    <source>
        <strain>ATCC 33913 / DSM 3586 / NCPPB 528 / LMG 568 / P 25</strain>
    </source>
</reference>
<keyword id="KW-0067">ATP-binding</keyword>
<keyword id="KW-0963">Cytoplasm</keyword>
<keyword id="KW-0418">Kinase</keyword>
<keyword id="KW-0545">Nucleotide biosynthesis</keyword>
<keyword id="KW-0547">Nucleotide-binding</keyword>
<keyword id="KW-1185">Reference proteome</keyword>
<keyword id="KW-0808">Transferase</keyword>
<dbReference type="EC" id="2.7.4.3" evidence="1"/>
<dbReference type="EMBL" id="AE008922">
    <property type="protein sequence ID" value="AAM42561.1"/>
    <property type="molecule type" value="Genomic_DNA"/>
</dbReference>
<dbReference type="RefSeq" id="NP_638637.1">
    <property type="nucleotide sequence ID" value="NC_003902.1"/>
</dbReference>
<dbReference type="RefSeq" id="WP_011038393.1">
    <property type="nucleotide sequence ID" value="NC_003902.1"/>
</dbReference>
<dbReference type="SMR" id="Q8P5P5"/>
<dbReference type="STRING" id="190485.XCC3291"/>
<dbReference type="EnsemblBacteria" id="AAM42561">
    <property type="protein sequence ID" value="AAM42561"/>
    <property type="gene ID" value="XCC3291"/>
</dbReference>
<dbReference type="KEGG" id="xcc:XCC3291"/>
<dbReference type="PATRIC" id="fig|190485.4.peg.3519"/>
<dbReference type="eggNOG" id="COG0563">
    <property type="taxonomic scope" value="Bacteria"/>
</dbReference>
<dbReference type="HOGENOM" id="CLU_032354_4_1_6"/>
<dbReference type="OrthoDB" id="9805030at2"/>
<dbReference type="UniPathway" id="UPA00588">
    <property type="reaction ID" value="UER00649"/>
</dbReference>
<dbReference type="Proteomes" id="UP000001010">
    <property type="component" value="Chromosome"/>
</dbReference>
<dbReference type="GO" id="GO:0005737">
    <property type="term" value="C:cytoplasm"/>
    <property type="evidence" value="ECO:0007669"/>
    <property type="project" value="UniProtKB-SubCell"/>
</dbReference>
<dbReference type="GO" id="GO:0004017">
    <property type="term" value="F:adenylate kinase activity"/>
    <property type="evidence" value="ECO:0007669"/>
    <property type="project" value="UniProtKB-UniRule"/>
</dbReference>
<dbReference type="GO" id="GO:0005524">
    <property type="term" value="F:ATP binding"/>
    <property type="evidence" value="ECO:0007669"/>
    <property type="project" value="UniProtKB-UniRule"/>
</dbReference>
<dbReference type="GO" id="GO:0044209">
    <property type="term" value="P:AMP salvage"/>
    <property type="evidence" value="ECO:0007669"/>
    <property type="project" value="UniProtKB-UniRule"/>
</dbReference>
<dbReference type="CDD" id="cd01428">
    <property type="entry name" value="ADK"/>
    <property type="match status" value="1"/>
</dbReference>
<dbReference type="Gene3D" id="3.40.50.300">
    <property type="entry name" value="P-loop containing nucleotide triphosphate hydrolases"/>
    <property type="match status" value="1"/>
</dbReference>
<dbReference type="HAMAP" id="MF_00235">
    <property type="entry name" value="Adenylate_kinase_Adk"/>
    <property type="match status" value="1"/>
</dbReference>
<dbReference type="InterPro" id="IPR006259">
    <property type="entry name" value="Adenyl_kin_sub"/>
</dbReference>
<dbReference type="InterPro" id="IPR000850">
    <property type="entry name" value="Adenylat/UMP-CMP_kin"/>
</dbReference>
<dbReference type="InterPro" id="IPR033690">
    <property type="entry name" value="Adenylat_kinase_CS"/>
</dbReference>
<dbReference type="InterPro" id="IPR027417">
    <property type="entry name" value="P-loop_NTPase"/>
</dbReference>
<dbReference type="NCBIfam" id="TIGR01351">
    <property type="entry name" value="adk"/>
    <property type="match status" value="1"/>
</dbReference>
<dbReference type="NCBIfam" id="NF001381">
    <property type="entry name" value="PRK00279.1-3"/>
    <property type="match status" value="1"/>
</dbReference>
<dbReference type="NCBIfam" id="NF011100">
    <property type="entry name" value="PRK14527.1"/>
    <property type="match status" value="1"/>
</dbReference>
<dbReference type="NCBIfam" id="NF011101">
    <property type="entry name" value="PRK14528.1"/>
    <property type="match status" value="1"/>
</dbReference>
<dbReference type="NCBIfam" id="NF011104">
    <property type="entry name" value="PRK14531.1"/>
    <property type="match status" value="1"/>
</dbReference>
<dbReference type="NCBIfam" id="NF011105">
    <property type="entry name" value="PRK14532.1"/>
    <property type="match status" value="1"/>
</dbReference>
<dbReference type="PANTHER" id="PTHR23359">
    <property type="entry name" value="NUCLEOTIDE KINASE"/>
    <property type="match status" value="1"/>
</dbReference>
<dbReference type="Pfam" id="PF00406">
    <property type="entry name" value="ADK"/>
    <property type="match status" value="1"/>
</dbReference>
<dbReference type="PRINTS" id="PR00094">
    <property type="entry name" value="ADENYLTKNASE"/>
</dbReference>
<dbReference type="SUPFAM" id="SSF52540">
    <property type="entry name" value="P-loop containing nucleoside triphosphate hydrolases"/>
    <property type="match status" value="1"/>
</dbReference>
<dbReference type="PROSITE" id="PS00113">
    <property type="entry name" value="ADENYLATE_KINASE"/>
    <property type="match status" value="1"/>
</dbReference>